<proteinExistence type="evidence at transcript level"/>
<protein>
    <recommendedName>
        <fullName>E3 ubiquitin-protein ligase Mdm2</fullName>
        <ecNumber evidence="2">2.3.2.27</ecNumber>
    </recommendedName>
    <alternativeName>
        <fullName>Double minute 2 protein</fullName>
        <shortName>Cdm2</shortName>
    </alternativeName>
    <alternativeName>
        <fullName evidence="10">RING-type E3 ubiquitin transferase Mdm2</fullName>
    </alternativeName>
    <alternativeName>
        <fullName>p53-binding protein Mdm2</fullName>
    </alternativeName>
</protein>
<reference key="1">
    <citation type="journal article" date="2000" name="Cancer Lett.">
        <title>Cloning, sequence analysis and expression of the cDNAs encoding the canine and equine homologues of the mouse double minute 2 (mdm2) proto-oncogene.</title>
        <authorList>
            <person name="Nasir L."/>
            <person name="Burr P.D."/>
            <person name="McFarlane S.T."/>
            <person name="Gault E."/>
            <person name="Thompson H."/>
            <person name="Argyle D.J."/>
        </authorList>
    </citation>
    <scope>NUCLEOTIDE SEQUENCE [MRNA] OF 1-484</scope>
</reference>
<reference key="2">
    <citation type="journal article" date="1999" name="Oncogene">
        <title>A novel exon within the mdm2 gene modulates translation initiation in vitro and disrupts the p53-binding domain of mdm2 protein.</title>
        <authorList>
            <person name="Veldhoen N."/>
            <person name="Metcalfe S."/>
            <person name="Milner J."/>
        </authorList>
    </citation>
    <scope>NUCLEOTIDE SEQUENCE [MRNA] (ISOFORMS MDM2 AND MDM2-ALPHA)</scope>
</reference>
<evidence type="ECO:0000250" key="1"/>
<evidence type="ECO:0000250" key="2">
    <source>
        <dbReference type="UniProtKB" id="P23804"/>
    </source>
</evidence>
<evidence type="ECO:0000250" key="3">
    <source>
        <dbReference type="UniProtKB" id="Q00987"/>
    </source>
</evidence>
<evidence type="ECO:0000255" key="4"/>
<evidence type="ECO:0000255" key="5">
    <source>
        <dbReference type="PROSITE-ProRule" id="PRU00175"/>
    </source>
</evidence>
<evidence type="ECO:0000255" key="6">
    <source>
        <dbReference type="PROSITE-ProRule" id="PRU00322"/>
    </source>
</evidence>
<evidence type="ECO:0000255" key="7">
    <source>
        <dbReference type="PROSITE-ProRule" id="PRU01273"/>
    </source>
</evidence>
<evidence type="ECO:0000256" key="8">
    <source>
        <dbReference type="SAM" id="MobiDB-lite"/>
    </source>
</evidence>
<evidence type="ECO:0000303" key="9">
    <source>
    </source>
</evidence>
<evidence type="ECO:0000305" key="10"/>
<sequence length="487" mass="54696">MCNTNMSVSTGGAVSTSQIPASEQETLVRPKPLLLKLLKSVGAQKDTYTMKEVIFYLGQYIMTKRLYDEKQQHIVYCSNDLLGDLFGVPSFSVKEHRKIYTMIYRNLVVVNQHEPSDSGTSVSENSCHREGGSDQKDPVQELQEEKPSSSDLISRPSTSSRRRTISETEEHADDLPGERQRKRHKSDSISLSFDESLALCVIREICCERSSSSESTGTPSNPDLDAGVSEHSGDWLDQDSVSDQFSVEFEVESLDSEDYSLSEEGQELSDEDDEVYRVTVYQAGESDTDSFEEDPEISLADYWKCTSCNEMNPPLPPHCNRCWALRENWLPEDKGKIPEKATPENSTQVEEGFDVPDCKKAAASDSRESCAEEIDDKITQASHSQESEDYSQPSTSNSIIYSSQEDVKEFEREETQDKEEIVESSFPLNAIEPCVICQGRPKNGCIVHGKTGHLMACFTCAKKLKKRNKPCPVCRQPIQMIVLTYFP</sequence>
<comment type="function">
    <text evidence="2 3">E3 ubiquitin-protein ligase that mediates ubiquitination of p53/TP53, leading to its degradation by the proteasome. Inhibits p53/TP53- and p73/TP73-mediated cell cycle arrest and apoptosis by binding its transcriptional activation domain. Also acts as a ubiquitin ligase E3 toward itself and ARRB1. Permits the nuclear export of p53/TP53. Promotes proteasome-dependent ubiquitin-independent degradation of retinoblastoma RB1 protein. Inhibits DAXX-mediated apoptosis by inducing its ubiquitination and degradation. Component of the TRIM28/KAP1-MDM2-p53/TP53 complex involved in stabilizing p53/TP53. Also a component of the TRIM28/KAP1-ERBB4-MDM2 complex which links growth factor and DNA damage response pathways. Mediates ubiquitination and subsequent proteasome degradation of DYRK2 in nucleus. Ubiquitinates IGF1R and SNAI1 and promotes them to proteasomal degradation. Ubiquitinates DCX, leading to DCX degradation and reduction of the dendritic spine density of olfactory bulb granule cells. Ubiquitinates DLG4, leading to proteasomal degradation of DLG4 which is required for AMPA receptor endocytosis (By similarity). Negatively regulates NDUFS1, leading to decreased mitochondrial respiration, marked oxidative stress, and commitment to the mitochondrial pathway of apoptosis (By similarity). Binds NDUFS1 leading to its cytosolic retention rather than mitochondrial localization resulting in decreased supercomplex assembly (interactions between complex I and complex III), decreased complex I activity, ROS production, and apoptosis (By similarity).</text>
</comment>
<comment type="catalytic activity">
    <reaction evidence="2">
        <text>S-ubiquitinyl-[E2 ubiquitin-conjugating enzyme]-L-cysteine + [acceptor protein]-L-lysine = [E2 ubiquitin-conjugating enzyme]-L-cysteine + N(6)-ubiquitinyl-[acceptor protein]-L-lysine.</text>
        <dbReference type="EC" id="2.3.2.27"/>
    </reaction>
</comment>
<comment type="subunit">
    <text evidence="2 3">Interacts with p53/TP53, TP73/p73, RBL5 and RP11. Binds specifically to RNA. Can interact with RB1, E1A-associated protein EP300 and the E2F1 transcription factor. Forms a ternary complex with p53/TP53 and WWOX. Interacts with CDKN2AIP, RFWD3, USP7, PYHIN1 and RBBP6. Interacts with ARRB1 and ARRB2. Interacts with PSMA3. Found in a trimeric complex with MDM2, MDM4 and USP2. Interacts with USP2 (via N-terminus and C-terminus). Interacts with MDM4. Part of a complex with MDM2, DAXX, RASSF1 and USP7. Part of a complex with DAXX, MDM2 and USP7. Interacts directly with DAXX and USP7. Interacts (via C-terminus) with RASSF1 isoform A (via N-terminus); the interaction is independent of TP53. Interacts with APEX1; leading to its ubiquitination and degradation. Interacts with RYBP; this inhibits ubiquitination of TP53. Identified in a complex with RYBP and p53/TP53. Also a component of the TRIM28/KAP1-MDM2-p53/TP53 complex involved in regulating p53/TP53 stabilization and activity. Binds directly both p53/TP53 and TRIM28. Component of the TRIM28/KAP1-ERBB4-MDM2 complex involved in connecting growth factor responses with DNA damage. Interacts directly with both TRIM28 and ERBB4 in the complex. Interacts with DYRK2. Interacts with IGF1R. Interacts with TRIM13; the interaction ubiquitinates MDM2 leading to its proteasomal degradation. Interacts with SNAI1; this interaction promotes SNAI1 ubiquitination. Interacts with NOTCH1 (via intracellular domain). Interacts with FHIT. Interacts with RFFL and RNF34; the interaction stabilizes MDM2. Interacts with CDK5RAP3 and CDKN2A/ARF; form a ternary complex involved in regulation of p53/TP53. Interacts with MTA1. Interacts with AARB2. Interacts with MTBP. Interacts with PML. Interacts with TBRG1. Interacts (via its RanBP2-type zinc finger domain) with RPL11 in the 5S RNP complex composed of 5S RNA, RPL5 and RPL11; this interaction occurs in the nucleoplasm and negatively regulates MDM2-mediated TP53 ubiquitination and degradation (By similarity). Interacts with ADGRB1; the interaction results in inhibition of MDM2-mediated ubiquitination and degradation of DLG4/PSD95, promoting DLG4 stability and regulating synaptic plasticity. Interacts with RPL23A; this interaction may promote p53/TP53 polyubiquitination (By similarity). Interacts with NDUFS1 (By similarity). Interacts with MORN3; the interaction enhances the ubiquitination of p53/TP53 (By similarity).</text>
</comment>
<comment type="subcellular location">
    <subcellularLocation>
        <location evidence="2">Nucleus</location>
        <location evidence="2">Nucleoplasm</location>
    </subcellularLocation>
    <subcellularLocation>
        <location evidence="2">Cytoplasm</location>
    </subcellularLocation>
    <subcellularLocation>
        <location evidence="2">Nucleus</location>
        <location evidence="2">Nucleolus</location>
    </subcellularLocation>
    <subcellularLocation>
        <location evidence="3">Nucleus</location>
    </subcellularLocation>
    <text evidence="2 3">Expressed predominantly in the nucleoplasm. Interaction with ARF(P14) results in the localization of both proteins to the nucleolus. The nucleolar localization signals in both ARF(P14) and MDM2 may be necessary to allow efficient nucleolar localization of both proteins. Colocalizes with RASSF1 isoform A in the nucleus (By similarity).</text>
</comment>
<comment type="alternative products">
    <event type="alternative splicing"/>
    <isoform>
        <id>P56950-1</id>
        <name>Mdm2</name>
        <sequence type="displayed"/>
    </isoform>
    <isoform>
        <id>P56950-2</id>
        <name>Mdm2-alpha</name>
        <sequence type="described" ref="VSP_003206"/>
    </isoform>
</comment>
<comment type="tissue specificity">
    <text>Isoform Mdm2-alpha is present in lymphoid and testicular tissues.</text>
</comment>
<comment type="domain">
    <text evidence="1">Region I is sufficient for binding p53 and inhibiting its G1 arrest and apoptosis functions. It also binds p73 and E2F1. Region II contains most of a central acidic region required for interaction with ribosomal protein L5 and a putative C4-type zinc finger. The RING finger domain which coordinates two molecules of zinc interacts specifically with RNA whether or not zinc is present and mediates the heterooligomerization with MDM4. It is also essential for its ubiquitin ligase E3 activity toward p53 and itself (By similarity). Interacts with IGF1R (By similarity).</text>
</comment>
<comment type="PTM">
    <text evidence="1">Phosphorylation on Ser-166 by SGK1 activates ubiquitination of p53/TP53. Phosphorylated at multiple sites near the RING domain by ATM upon DNA damage; this promotes its ubiquitination and degradation, preventing p53/TP53 degradation (By similarity).</text>
</comment>
<comment type="PTM">
    <text evidence="3">Autoubiquitination leads to proteasomal degradation; resulting in p53/TP53 activation it may be regulated by SFN. Also ubiquitinated by TRIM13. ATM-phosphorylated MDM2 is ubiquitinated by the SCF(FBXO31) complex in response to genotoxic stress, promoting its degradation and p53/TP53-mediated DNA damage response. Deubiquitinated by USP2 leads to its accumulation and increases deubiquitination and degradation of p53/TP53. Deubiquitinated by USP7 leading to its stabilization.</text>
</comment>
<comment type="similarity">
    <text evidence="10">Belongs to the MDM2/MDM4 family.</text>
</comment>
<name>MDM2_CANLF</name>
<dbReference type="EC" id="2.3.2.27" evidence="2"/>
<dbReference type="EMBL" id="AF100705">
    <property type="protein sequence ID" value="AAF67833.1"/>
    <property type="molecule type" value="mRNA"/>
</dbReference>
<dbReference type="EMBL" id="AF322416">
    <property type="protein sequence ID" value="AAG42840.1"/>
    <property type="molecule type" value="mRNA"/>
</dbReference>
<dbReference type="RefSeq" id="NP_001003103.1">
    <property type="nucleotide sequence ID" value="NM_001003103.2"/>
</dbReference>
<dbReference type="RefSeq" id="XP_038534689.1">
    <molecule id="P56950-2"/>
    <property type="nucleotide sequence ID" value="XM_038678761.1"/>
</dbReference>
<dbReference type="BMRB" id="P56950"/>
<dbReference type="SMR" id="P56950"/>
<dbReference type="FunCoup" id="P56950">
    <property type="interactions" value="845"/>
</dbReference>
<dbReference type="STRING" id="9615.ENSCAFP00000065951"/>
<dbReference type="BindingDB" id="P56950"/>
<dbReference type="ChEMBL" id="CHEMBL3600278"/>
<dbReference type="PaxDb" id="9612-ENSCAFP00000000608"/>
<dbReference type="Ensembl" id="ENSCAFT00000073642.2">
    <molecule id="P56950-2"/>
    <property type="protein sequence ID" value="ENSCAFP00000062749.1"/>
    <property type="gene ID" value="ENSCAFG00000000418.5"/>
</dbReference>
<dbReference type="Ensembl" id="ENSCAFT00030016129.1">
    <molecule id="P56950-2"/>
    <property type="protein sequence ID" value="ENSCAFP00030014077.1"/>
    <property type="gene ID" value="ENSCAFG00030007887.1"/>
</dbReference>
<dbReference type="Ensembl" id="ENSCAFT00845029644.1">
    <molecule id="P56950-2"/>
    <property type="protein sequence ID" value="ENSCAFP00845023282.1"/>
    <property type="gene ID" value="ENSCAFG00845016387.1"/>
</dbReference>
<dbReference type="GeneID" id="403693"/>
<dbReference type="KEGG" id="cfa:403693"/>
<dbReference type="CTD" id="4193"/>
<dbReference type="eggNOG" id="ENOG502QQNV">
    <property type="taxonomic scope" value="Eukaryota"/>
</dbReference>
<dbReference type="GeneTree" id="ENSGT00530000063539"/>
<dbReference type="InParanoid" id="P56950"/>
<dbReference type="OrthoDB" id="24526at2759"/>
<dbReference type="Reactome" id="R-CFA-2559580">
    <property type="pathway name" value="Oxidative Stress Induced Senescence"/>
</dbReference>
<dbReference type="Reactome" id="R-CFA-2559585">
    <property type="pathway name" value="Oncogene Induced Senescence"/>
</dbReference>
<dbReference type="Reactome" id="R-CFA-399719">
    <property type="pathway name" value="Trafficking of AMPA receptors"/>
</dbReference>
<dbReference type="Reactome" id="R-CFA-5689880">
    <property type="pathway name" value="Ub-specific processing proteases"/>
</dbReference>
<dbReference type="Reactome" id="R-CFA-6804756">
    <property type="pathway name" value="Regulation of TP53 Activity through Phosphorylation"/>
</dbReference>
<dbReference type="Reactome" id="R-CFA-6804757">
    <property type="pathway name" value="Regulation of TP53 Degradation"/>
</dbReference>
<dbReference type="Reactome" id="R-CFA-6804760">
    <property type="pathway name" value="Regulation of TP53 Activity through Methylation"/>
</dbReference>
<dbReference type="Reactome" id="R-CFA-69541">
    <property type="pathway name" value="Stabilization of p53"/>
</dbReference>
<dbReference type="Reactome" id="R-CFA-8941858">
    <property type="pathway name" value="Regulation of RUNX3 expression and activity"/>
</dbReference>
<dbReference type="Proteomes" id="UP000002254">
    <property type="component" value="Chromosome 10"/>
</dbReference>
<dbReference type="Proteomes" id="UP000694429">
    <property type="component" value="Chromosome 10"/>
</dbReference>
<dbReference type="Proteomes" id="UP000694542">
    <property type="component" value="Unplaced"/>
</dbReference>
<dbReference type="Proteomes" id="UP000805418">
    <property type="component" value="Chromosome 10"/>
</dbReference>
<dbReference type="Bgee" id="ENSCAFG00000000418">
    <property type="expression patterns" value="Expressed in keratinocyte and 46 other cell types or tissues"/>
</dbReference>
<dbReference type="GO" id="GO:0005737">
    <property type="term" value="C:cytoplasm"/>
    <property type="evidence" value="ECO:0000250"/>
    <property type="project" value="UniProtKB"/>
</dbReference>
<dbReference type="GO" id="GO:0005730">
    <property type="term" value="C:nucleolus"/>
    <property type="evidence" value="ECO:0000250"/>
    <property type="project" value="UniProtKB"/>
</dbReference>
<dbReference type="GO" id="GO:0005654">
    <property type="term" value="C:nucleoplasm"/>
    <property type="evidence" value="ECO:0007669"/>
    <property type="project" value="UniProtKB-SubCell"/>
</dbReference>
<dbReference type="GO" id="GO:0005634">
    <property type="term" value="C:nucleus"/>
    <property type="evidence" value="ECO:0000250"/>
    <property type="project" value="UniProtKB"/>
</dbReference>
<dbReference type="GO" id="GO:0008097">
    <property type="term" value="F:5S rRNA binding"/>
    <property type="evidence" value="ECO:0000250"/>
    <property type="project" value="UniProtKB"/>
</dbReference>
<dbReference type="GO" id="GO:0042802">
    <property type="term" value="F:identical protein binding"/>
    <property type="evidence" value="ECO:0007669"/>
    <property type="project" value="InterPro"/>
</dbReference>
<dbReference type="GO" id="GO:0043021">
    <property type="term" value="F:ribonucleoprotein complex binding"/>
    <property type="evidence" value="ECO:0000250"/>
    <property type="project" value="UniProtKB"/>
</dbReference>
<dbReference type="GO" id="GO:0043130">
    <property type="term" value="F:ubiquitin binding"/>
    <property type="evidence" value="ECO:0000250"/>
    <property type="project" value="UniProtKB"/>
</dbReference>
<dbReference type="GO" id="GO:0061630">
    <property type="term" value="F:ubiquitin protein ligase activity"/>
    <property type="evidence" value="ECO:0000318"/>
    <property type="project" value="GO_Central"/>
</dbReference>
<dbReference type="GO" id="GO:0008270">
    <property type="term" value="F:zinc ion binding"/>
    <property type="evidence" value="ECO:0007669"/>
    <property type="project" value="UniProtKB-KW"/>
</dbReference>
<dbReference type="GO" id="GO:0006915">
    <property type="term" value="P:apoptotic process"/>
    <property type="evidence" value="ECO:0000250"/>
    <property type="project" value="UniProtKB"/>
</dbReference>
<dbReference type="GO" id="GO:0043066">
    <property type="term" value="P:negative regulation of apoptotic process"/>
    <property type="evidence" value="ECO:0000318"/>
    <property type="project" value="GO_Central"/>
</dbReference>
<dbReference type="GO" id="GO:0045931">
    <property type="term" value="P:positive regulation of mitotic cell cycle"/>
    <property type="evidence" value="ECO:0000318"/>
    <property type="project" value="GO_Central"/>
</dbReference>
<dbReference type="GO" id="GO:0016567">
    <property type="term" value="P:protein ubiquitination"/>
    <property type="evidence" value="ECO:0000250"/>
    <property type="project" value="UniProtKB"/>
</dbReference>
<dbReference type="GO" id="GO:0065008">
    <property type="term" value="P:regulation of biological quality"/>
    <property type="evidence" value="ECO:0007669"/>
    <property type="project" value="UniProtKB-ARBA"/>
</dbReference>
<dbReference type="GO" id="GO:0006511">
    <property type="term" value="P:ubiquitin-dependent protein catabolic process"/>
    <property type="evidence" value="ECO:0000318"/>
    <property type="project" value="GO_Central"/>
</dbReference>
<dbReference type="CDD" id="cd17672">
    <property type="entry name" value="MDM2"/>
    <property type="match status" value="1"/>
</dbReference>
<dbReference type="CDD" id="cd16783">
    <property type="entry name" value="mRING-HC-C2H2C4_MDM2"/>
    <property type="match status" value="1"/>
</dbReference>
<dbReference type="FunFam" id="1.10.245.10:FF:000002">
    <property type="entry name" value="E3 ubiquitin-protein ligase Mdm2"/>
    <property type="match status" value="1"/>
</dbReference>
<dbReference type="FunFam" id="2.30.30.380:FF:000005">
    <property type="entry name" value="E3 ubiquitin-protein ligase Mdm2"/>
    <property type="match status" value="1"/>
</dbReference>
<dbReference type="FunFam" id="3.30.40.10:FF:000076">
    <property type="entry name" value="E3 ubiquitin-protein ligase Mdm2"/>
    <property type="match status" value="1"/>
</dbReference>
<dbReference type="Gene3D" id="1.10.245.10">
    <property type="entry name" value="SWIB/MDM2 domain"/>
    <property type="match status" value="1"/>
</dbReference>
<dbReference type="Gene3D" id="3.30.40.10">
    <property type="entry name" value="Zinc/RING finger domain, C3HC4 (zinc finger)"/>
    <property type="match status" value="1"/>
</dbReference>
<dbReference type="Gene3D" id="2.30.30.380">
    <property type="entry name" value="Zn-finger domain of Sec23/24"/>
    <property type="match status" value="1"/>
</dbReference>
<dbReference type="InterPro" id="IPR028340">
    <property type="entry name" value="Mdm2"/>
</dbReference>
<dbReference type="InterPro" id="IPR044080">
    <property type="entry name" value="MDM2_mRING-HC-C2H2C4"/>
</dbReference>
<dbReference type="InterPro" id="IPR016495">
    <property type="entry name" value="p53_neg-reg_MDM_2/4"/>
</dbReference>
<dbReference type="InterPro" id="IPR036885">
    <property type="entry name" value="SWIB_MDM2_dom_sf"/>
</dbReference>
<dbReference type="InterPro" id="IPR003121">
    <property type="entry name" value="SWIB_MDM2_domain"/>
</dbReference>
<dbReference type="InterPro" id="IPR001876">
    <property type="entry name" value="Znf_RanBP2"/>
</dbReference>
<dbReference type="InterPro" id="IPR036443">
    <property type="entry name" value="Znf_RanBP2_sf"/>
</dbReference>
<dbReference type="InterPro" id="IPR001841">
    <property type="entry name" value="Znf_RING"/>
</dbReference>
<dbReference type="InterPro" id="IPR013083">
    <property type="entry name" value="Znf_RING/FYVE/PHD"/>
</dbReference>
<dbReference type="PANTHER" id="PTHR46858:SF13">
    <property type="entry name" value="E3 UBIQUITIN-PROTEIN LIGASE MDM2"/>
    <property type="match status" value="1"/>
</dbReference>
<dbReference type="PANTHER" id="PTHR46858">
    <property type="entry name" value="OS05G0521000 PROTEIN"/>
    <property type="match status" value="1"/>
</dbReference>
<dbReference type="Pfam" id="PF02201">
    <property type="entry name" value="SWIB"/>
    <property type="match status" value="1"/>
</dbReference>
<dbReference type="Pfam" id="PF13920">
    <property type="entry name" value="zf-C3HC4_3"/>
    <property type="match status" value="1"/>
</dbReference>
<dbReference type="Pfam" id="PF00641">
    <property type="entry name" value="Zn_ribbon_RanBP"/>
    <property type="match status" value="1"/>
</dbReference>
<dbReference type="PIRSF" id="PIRSF500700">
    <property type="entry name" value="MDM2"/>
    <property type="match status" value="1"/>
</dbReference>
<dbReference type="PIRSF" id="PIRSF006748">
    <property type="entry name" value="p53_MDM_2/4"/>
    <property type="match status" value="1"/>
</dbReference>
<dbReference type="SUPFAM" id="SSF90209">
    <property type="entry name" value="Ran binding protein zinc finger-like"/>
    <property type="match status" value="1"/>
</dbReference>
<dbReference type="SUPFAM" id="SSF57850">
    <property type="entry name" value="RING/U-box"/>
    <property type="match status" value="1"/>
</dbReference>
<dbReference type="SUPFAM" id="SSF47592">
    <property type="entry name" value="SWIB/MDM2 domain"/>
    <property type="match status" value="2"/>
</dbReference>
<dbReference type="PROSITE" id="PS51925">
    <property type="entry name" value="SWIB_MDM2"/>
    <property type="match status" value="1"/>
</dbReference>
<dbReference type="PROSITE" id="PS01358">
    <property type="entry name" value="ZF_RANBP2_1"/>
    <property type="match status" value="1"/>
</dbReference>
<dbReference type="PROSITE" id="PS50199">
    <property type="entry name" value="ZF_RANBP2_2"/>
    <property type="match status" value="1"/>
</dbReference>
<dbReference type="PROSITE" id="PS50089">
    <property type="entry name" value="ZF_RING_2"/>
    <property type="match status" value="1"/>
</dbReference>
<keyword id="KW-0025">Alternative splicing</keyword>
<keyword id="KW-0053">Apoptosis</keyword>
<keyword id="KW-0963">Cytoplasm</keyword>
<keyword id="KW-0479">Metal-binding</keyword>
<keyword id="KW-0539">Nucleus</keyword>
<keyword id="KW-0597">Phosphoprotein</keyword>
<keyword id="KW-1185">Reference proteome</keyword>
<keyword id="KW-0808">Transferase</keyword>
<keyword id="KW-0832">Ubl conjugation</keyword>
<keyword id="KW-0833">Ubl conjugation pathway</keyword>
<keyword id="KW-0862">Zinc</keyword>
<keyword id="KW-0863">Zinc-finger</keyword>
<gene>
    <name type="primary">MDM2</name>
</gene>
<feature type="chain" id="PRO_0000157329" description="E3 ubiquitin-protein ligase Mdm2">
    <location>
        <begin position="1"/>
        <end position="487"/>
    </location>
</feature>
<feature type="domain" description="SWIB/MDM2" evidence="7">
    <location>
        <begin position="26"/>
        <end position="109"/>
    </location>
</feature>
<feature type="zinc finger region" description="RanBP2-type" evidence="6">
    <location>
        <begin position="299"/>
        <end position="328"/>
    </location>
</feature>
<feature type="zinc finger region" description="RING-type" evidence="5">
    <location>
        <begin position="434"/>
        <end position="475"/>
    </location>
</feature>
<feature type="region of interest" description="Sufficient to promote the mitochondrial pathway of apoptosis" evidence="3">
    <location>
        <begin position="1"/>
        <end position="101"/>
    </location>
</feature>
<feature type="region of interest" description="Disordered" evidence="8">
    <location>
        <begin position="1"/>
        <end position="21"/>
    </location>
</feature>
<feature type="region of interest" description="Disordered" evidence="8">
    <location>
        <begin position="114"/>
        <end position="188"/>
    </location>
</feature>
<feature type="region of interest" description="Interaction with PYHIN1 and necessary for interaction with RFFL and RNF34" evidence="3">
    <location>
        <begin position="150"/>
        <end position="230"/>
    </location>
</feature>
<feature type="region of interest" description="Interaction with MTBP" evidence="1">
    <location>
        <begin position="170"/>
        <end position="306"/>
    </location>
</feature>
<feature type="region of interest" description="ARF-binding">
    <location>
        <begin position="210"/>
        <end position="304"/>
    </location>
</feature>
<feature type="region of interest" description="Disordered" evidence="8">
    <location>
        <begin position="211"/>
        <end position="237"/>
    </location>
</feature>
<feature type="region of interest" description="Interaction with USP7" evidence="1">
    <location>
        <begin position="223"/>
        <end position="232"/>
    </location>
</feature>
<feature type="region of interest" description="Region II">
    <location>
        <begin position="242"/>
        <end position="331"/>
    </location>
</feature>
<feature type="region of interest" description="Disordered" evidence="8">
    <location>
        <begin position="252"/>
        <end position="275"/>
    </location>
</feature>
<feature type="region of interest" description="Disordered" evidence="8">
    <location>
        <begin position="369"/>
        <end position="397"/>
    </location>
</feature>
<feature type="short sequence motif" description="Nuclear localization signal" evidence="4">
    <location>
        <begin position="179"/>
        <end position="185"/>
    </location>
</feature>
<feature type="short sequence motif" description="Nuclear export signal">
    <location>
        <begin position="190"/>
        <end position="202"/>
    </location>
</feature>
<feature type="short sequence motif" description="Nucleolar localization signal" evidence="4">
    <location>
        <begin position="462"/>
        <end position="469"/>
    </location>
</feature>
<feature type="compositionally biased region" description="Basic and acidic residues" evidence="8">
    <location>
        <begin position="126"/>
        <end position="148"/>
    </location>
</feature>
<feature type="compositionally biased region" description="Basic and acidic residues" evidence="8">
    <location>
        <begin position="164"/>
        <end position="179"/>
    </location>
</feature>
<feature type="compositionally biased region" description="Acidic residues" evidence="8">
    <location>
        <begin position="252"/>
        <end position="274"/>
    </location>
</feature>
<feature type="compositionally biased region" description="Polar residues" evidence="8">
    <location>
        <begin position="379"/>
        <end position="397"/>
    </location>
</feature>
<feature type="binding site" evidence="3">
    <location>
        <position position="305"/>
    </location>
    <ligand>
        <name>Zn(2+)</name>
        <dbReference type="ChEBI" id="CHEBI:29105"/>
    </ligand>
</feature>
<feature type="binding site" evidence="3">
    <location>
        <position position="308"/>
    </location>
    <ligand>
        <name>Zn(2+)</name>
        <dbReference type="ChEBI" id="CHEBI:29105"/>
    </ligand>
</feature>
<feature type="binding site" evidence="3">
    <location>
        <position position="319"/>
    </location>
    <ligand>
        <name>Zn(2+)</name>
        <dbReference type="ChEBI" id="CHEBI:29105"/>
    </ligand>
</feature>
<feature type="binding site" evidence="3">
    <location>
        <position position="322"/>
    </location>
    <ligand>
        <name>Zn(2+)</name>
        <dbReference type="ChEBI" id="CHEBI:29105"/>
    </ligand>
</feature>
<feature type="modified residue" description="Phosphoserine; by SGK1" evidence="3">
    <location>
        <position position="166"/>
    </location>
</feature>
<feature type="modified residue" description="Phosphoserine" evidence="2">
    <location>
        <position position="190"/>
    </location>
</feature>
<feature type="modified residue" description="Phosphoserine" evidence="3">
    <location>
        <position position="240"/>
    </location>
</feature>
<feature type="modified residue" description="Phosphoserine" evidence="3">
    <location>
        <position position="242"/>
    </location>
</feature>
<feature type="modified residue" description="Phosphoserine" evidence="3">
    <location>
        <position position="246"/>
    </location>
</feature>
<feature type="modified residue" description="Phosphoserine" evidence="3">
    <location>
        <position position="260"/>
    </location>
</feature>
<feature type="modified residue" description="Phosphoserine" evidence="3">
    <location>
        <position position="262"/>
    </location>
</feature>
<feature type="modified residue" description="Phosphoserine; by ATM" evidence="3">
    <location>
        <position position="382"/>
    </location>
</feature>
<feature type="modified residue" description="Phosphoserine; by ATM" evidence="3">
    <location>
        <position position="391"/>
    </location>
</feature>
<feature type="modified residue" description="Phosphoserine; by ATM" evidence="3">
    <location>
        <position position="403"/>
    </location>
</feature>
<feature type="modified residue" description="Phosphothreonine; by ATM" evidence="3">
    <location>
        <position position="415"/>
    </location>
</feature>
<feature type="modified residue" description="Phosphoserine; by ATM" evidence="3">
    <location>
        <position position="425"/>
    </location>
</feature>
<feature type="splice variant" id="VSP_003206" description="In isoform Mdm2-alpha." evidence="9">
    <location>
        <begin position="1"/>
        <end position="61"/>
    </location>
</feature>
<feature type="sequence conflict" description="In Ref. 2; AAG42840." evidence="10" ref="2">
    <original>G</original>
    <variation>D</variation>
    <location>
        <position position="11"/>
    </location>
</feature>
<feature type="sequence conflict" description="In Ref. 2; AAG42840." evidence="10" ref="2">
    <original>QD</original>
    <variation>HH</variation>
    <location>
        <begin position="238"/>
        <end position="239"/>
    </location>
</feature>
<organism>
    <name type="scientific">Canis lupus familiaris</name>
    <name type="common">Dog</name>
    <name type="synonym">Canis familiaris</name>
    <dbReference type="NCBI Taxonomy" id="9615"/>
    <lineage>
        <taxon>Eukaryota</taxon>
        <taxon>Metazoa</taxon>
        <taxon>Chordata</taxon>
        <taxon>Craniata</taxon>
        <taxon>Vertebrata</taxon>
        <taxon>Euteleostomi</taxon>
        <taxon>Mammalia</taxon>
        <taxon>Eutheria</taxon>
        <taxon>Laurasiatheria</taxon>
        <taxon>Carnivora</taxon>
        <taxon>Caniformia</taxon>
        <taxon>Canidae</taxon>
        <taxon>Canis</taxon>
    </lineage>
</organism>
<accession>P56950</accession>
<accession>Q95KN5</accession>